<accession>Q8EPQ8</accession>
<dbReference type="EC" id="2.4.99.17" evidence="1"/>
<dbReference type="EMBL" id="BA000028">
    <property type="protein sequence ID" value="BAC13990.1"/>
    <property type="molecule type" value="Genomic_DNA"/>
</dbReference>
<dbReference type="RefSeq" id="WP_011066429.1">
    <property type="nucleotide sequence ID" value="NC_004193.1"/>
</dbReference>
<dbReference type="SMR" id="Q8EPQ8"/>
<dbReference type="STRING" id="221109.gene:10734280"/>
<dbReference type="KEGG" id="oih:OB2034"/>
<dbReference type="eggNOG" id="COG0809">
    <property type="taxonomic scope" value="Bacteria"/>
</dbReference>
<dbReference type="HOGENOM" id="CLU_039110_1_0_9"/>
<dbReference type="OrthoDB" id="9805933at2"/>
<dbReference type="PhylomeDB" id="Q8EPQ8"/>
<dbReference type="UniPathway" id="UPA00392"/>
<dbReference type="Proteomes" id="UP000000822">
    <property type="component" value="Chromosome"/>
</dbReference>
<dbReference type="GO" id="GO:0005737">
    <property type="term" value="C:cytoplasm"/>
    <property type="evidence" value="ECO:0007669"/>
    <property type="project" value="UniProtKB-SubCell"/>
</dbReference>
<dbReference type="GO" id="GO:0051075">
    <property type="term" value="F:S-adenosylmethionine:tRNA ribosyltransferase-isomerase activity"/>
    <property type="evidence" value="ECO:0007669"/>
    <property type="project" value="UniProtKB-EC"/>
</dbReference>
<dbReference type="GO" id="GO:0008616">
    <property type="term" value="P:queuosine biosynthetic process"/>
    <property type="evidence" value="ECO:0007669"/>
    <property type="project" value="UniProtKB-UniRule"/>
</dbReference>
<dbReference type="GO" id="GO:0002099">
    <property type="term" value="P:tRNA wobble guanine modification"/>
    <property type="evidence" value="ECO:0007669"/>
    <property type="project" value="TreeGrafter"/>
</dbReference>
<dbReference type="FunFam" id="2.40.10.240:FF:000002">
    <property type="entry name" value="S-adenosylmethionine:tRNA ribosyltransferase-isomerase"/>
    <property type="match status" value="1"/>
</dbReference>
<dbReference type="FunFam" id="3.40.1780.10:FF:000001">
    <property type="entry name" value="S-adenosylmethionine:tRNA ribosyltransferase-isomerase"/>
    <property type="match status" value="1"/>
</dbReference>
<dbReference type="Gene3D" id="2.40.10.240">
    <property type="entry name" value="QueA-like"/>
    <property type="match status" value="1"/>
</dbReference>
<dbReference type="Gene3D" id="3.40.1780.10">
    <property type="entry name" value="QueA-like"/>
    <property type="match status" value="1"/>
</dbReference>
<dbReference type="HAMAP" id="MF_00113">
    <property type="entry name" value="QueA"/>
    <property type="match status" value="1"/>
</dbReference>
<dbReference type="InterPro" id="IPR003699">
    <property type="entry name" value="QueA"/>
</dbReference>
<dbReference type="InterPro" id="IPR042118">
    <property type="entry name" value="QueA_dom1"/>
</dbReference>
<dbReference type="InterPro" id="IPR042119">
    <property type="entry name" value="QueA_dom2"/>
</dbReference>
<dbReference type="InterPro" id="IPR036100">
    <property type="entry name" value="QueA_sf"/>
</dbReference>
<dbReference type="NCBIfam" id="NF001140">
    <property type="entry name" value="PRK00147.1"/>
    <property type="match status" value="1"/>
</dbReference>
<dbReference type="NCBIfam" id="TIGR00113">
    <property type="entry name" value="queA"/>
    <property type="match status" value="1"/>
</dbReference>
<dbReference type="PANTHER" id="PTHR30307">
    <property type="entry name" value="S-ADENOSYLMETHIONINE:TRNA RIBOSYLTRANSFERASE-ISOMERASE"/>
    <property type="match status" value="1"/>
</dbReference>
<dbReference type="PANTHER" id="PTHR30307:SF0">
    <property type="entry name" value="S-ADENOSYLMETHIONINE:TRNA RIBOSYLTRANSFERASE-ISOMERASE"/>
    <property type="match status" value="1"/>
</dbReference>
<dbReference type="Pfam" id="PF02547">
    <property type="entry name" value="Queuosine_synth"/>
    <property type="match status" value="1"/>
</dbReference>
<dbReference type="SUPFAM" id="SSF111337">
    <property type="entry name" value="QueA-like"/>
    <property type="match status" value="1"/>
</dbReference>
<gene>
    <name evidence="1" type="primary">queA</name>
    <name type="ordered locus">OB2034</name>
</gene>
<comment type="function">
    <text evidence="1">Transfers and isomerizes the ribose moiety from AdoMet to the 7-aminomethyl group of 7-deazaguanine (preQ1-tRNA) to give epoxyqueuosine (oQ-tRNA).</text>
</comment>
<comment type="catalytic activity">
    <reaction evidence="1">
        <text>7-aminomethyl-7-carbaguanosine(34) in tRNA + S-adenosyl-L-methionine = epoxyqueuosine(34) in tRNA + adenine + L-methionine + 2 H(+)</text>
        <dbReference type="Rhea" id="RHEA:32155"/>
        <dbReference type="Rhea" id="RHEA-COMP:10342"/>
        <dbReference type="Rhea" id="RHEA-COMP:18582"/>
        <dbReference type="ChEBI" id="CHEBI:15378"/>
        <dbReference type="ChEBI" id="CHEBI:16708"/>
        <dbReference type="ChEBI" id="CHEBI:57844"/>
        <dbReference type="ChEBI" id="CHEBI:59789"/>
        <dbReference type="ChEBI" id="CHEBI:82833"/>
        <dbReference type="ChEBI" id="CHEBI:194443"/>
        <dbReference type="EC" id="2.4.99.17"/>
    </reaction>
</comment>
<comment type="pathway">
    <text evidence="1">tRNA modification; tRNA-queuosine biosynthesis.</text>
</comment>
<comment type="subunit">
    <text evidence="1">Monomer.</text>
</comment>
<comment type="subcellular location">
    <subcellularLocation>
        <location evidence="1">Cytoplasm</location>
    </subcellularLocation>
</comment>
<comment type="similarity">
    <text evidence="1">Belongs to the QueA family.</text>
</comment>
<organism>
    <name type="scientific">Oceanobacillus iheyensis (strain DSM 14371 / CIP 107618 / JCM 11309 / KCTC 3954 / HTE831)</name>
    <dbReference type="NCBI Taxonomy" id="221109"/>
    <lineage>
        <taxon>Bacteria</taxon>
        <taxon>Bacillati</taxon>
        <taxon>Bacillota</taxon>
        <taxon>Bacilli</taxon>
        <taxon>Bacillales</taxon>
        <taxon>Bacillaceae</taxon>
        <taxon>Oceanobacillus</taxon>
    </lineage>
</organism>
<reference key="1">
    <citation type="journal article" date="2002" name="Nucleic Acids Res.">
        <title>Genome sequence of Oceanobacillus iheyensis isolated from the Iheya Ridge and its unexpected adaptive capabilities to extreme environments.</title>
        <authorList>
            <person name="Takami H."/>
            <person name="Takaki Y."/>
            <person name="Uchiyama I."/>
        </authorList>
    </citation>
    <scope>NUCLEOTIDE SEQUENCE [LARGE SCALE GENOMIC DNA]</scope>
    <source>
        <strain>DSM 14371 / CIP 107618 / JCM 11309 / KCTC 3954 / HTE831</strain>
    </source>
</reference>
<evidence type="ECO:0000255" key="1">
    <source>
        <dbReference type="HAMAP-Rule" id="MF_00113"/>
    </source>
</evidence>
<proteinExistence type="inferred from homology"/>
<name>QUEA_OCEIH</name>
<protein>
    <recommendedName>
        <fullName evidence="1">S-adenosylmethionine:tRNA ribosyltransferase-isomerase</fullName>
        <ecNumber evidence="1">2.4.99.17</ecNumber>
    </recommendedName>
    <alternativeName>
        <fullName evidence="1">Queuosine biosynthesis protein QueA</fullName>
    </alternativeName>
</protein>
<sequence>MQIEDFDFHLPEELIAQTPLKDRTSSRLCVLDKQTSEITHRSFKDITTYLQAGDCLVLNDTKVLPARLYGVKSDTGAKIEVLLLHQQEEDTWEVLVKPAKKVKVGTEIIFGNGKLKATCIDLKDHGGRIMTFSYTGIFYEILDQLGEMPLPPYIKEQLPEQDRYQTVYAKEKGSAAAPTAGLHFTDKLLEDIKAMGVNIVFVTLHVGLGTFRPVSVDSVEDHDMHSEFYSMSESAAKTLNEAKAAGRRIISVGTTSTRTLETIVRDHDGKFVATRGWTDIFIYPPYKFRAIDGLITNFHLPKSTLIMMISALAGKEAILHAYNEAVKEEYRFFSFGDAMLIL</sequence>
<keyword id="KW-0963">Cytoplasm</keyword>
<keyword id="KW-0671">Queuosine biosynthesis</keyword>
<keyword id="KW-1185">Reference proteome</keyword>
<keyword id="KW-0949">S-adenosyl-L-methionine</keyword>
<keyword id="KW-0808">Transferase</keyword>
<feature type="chain" id="PRO_0000165419" description="S-adenosylmethionine:tRNA ribosyltransferase-isomerase">
    <location>
        <begin position="1"/>
        <end position="342"/>
    </location>
</feature>